<sequence>MAPAKKGGEKKKGRSAINEVVTREYTINIHKRIHGVGFKKRAPRALKEIRKFAMKEMGTPDVRIDTRLNKAVWAKGIRNVPYRIRVRLSRKRNEDEDSPNKLYTLVTYVPVTTFKNLQTVNVDEN</sequence>
<dbReference type="EMBL" id="X15940">
    <property type="protein sequence ID" value="CAA34066.1"/>
    <property type="molecule type" value="mRNA"/>
</dbReference>
<dbReference type="EMBL" id="AB061830">
    <property type="protein sequence ID" value="BAB79468.1"/>
    <property type="molecule type" value="Genomic_DNA"/>
</dbReference>
<dbReference type="EMBL" id="AK297483">
    <property type="protein sequence ID" value="BAH12588.1"/>
    <property type="molecule type" value="mRNA"/>
</dbReference>
<dbReference type="EMBL" id="AC016738">
    <property type="protein sequence ID" value="AAY14823.1"/>
    <property type="molecule type" value="Genomic_DNA"/>
</dbReference>
<dbReference type="EMBL" id="CH471127">
    <property type="protein sequence ID" value="EAX01826.1"/>
    <property type="molecule type" value="Genomic_DNA"/>
</dbReference>
<dbReference type="EMBL" id="CH471127">
    <property type="protein sequence ID" value="EAX01827.1"/>
    <property type="molecule type" value="Genomic_DNA"/>
</dbReference>
<dbReference type="EMBL" id="CH471127">
    <property type="protein sequence ID" value="EAX01829.1"/>
    <property type="molecule type" value="Genomic_DNA"/>
</dbReference>
<dbReference type="EMBL" id="BC017343">
    <property type="protein sequence ID" value="AAH17343.1"/>
    <property type="molecule type" value="mRNA"/>
</dbReference>
<dbReference type="EMBL" id="BC070210">
    <property type="protein sequence ID" value="AAH70210.1"/>
    <property type="molecule type" value="mRNA"/>
</dbReference>
<dbReference type="EMBL" id="BC070373">
    <property type="protein sequence ID" value="AAH70373.1"/>
    <property type="molecule type" value="mRNA"/>
</dbReference>
<dbReference type="EMBL" id="X69181">
    <property type="protein sequence ID" value="CAA48925.1"/>
    <property type="molecule type" value="mRNA"/>
</dbReference>
<dbReference type="CCDS" id="CCDS2049.1">
    <molecule id="P62899-1"/>
</dbReference>
<dbReference type="CCDS" id="CCDS46373.1">
    <molecule id="P62899-2"/>
</dbReference>
<dbReference type="CCDS" id="CCDS46374.1">
    <molecule id="P62899-3"/>
</dbReference>
<dbReference type="PIR" id="S05576">
    <property type="entry name" value="R5HU31"/>
</dbReference>
<dbReference type="RefSeq" id="NP_000984.1">
    <molecule id="P62899-1"/>
    <property type="nucleotide sequence ID" value="NM_000993.5"/>
</dbReference>
<dbReference type="RefSeq" id="NP_001092047.1">
    <molecule id="P62899-2"/>
    <property type="nucleotide sequence ID" value="NM_001098577.3"/>
</dbReference>
<dbReference type="RefSeq" id="NP_001093163.1">
    <molecule id="P62899-3"/>
    <property type="nucleotide sequence ID" value="NM_001099693.2"/>
</dbReference>
<dbReference type="PDB" id="4UG0">
    <property type="method" value="EM"/>
    <property type="chains" value="Ld=1-125"/>
</dbReference>
<dbReference type="PDB" id="4V6X">
    <property type="method" value="EM"/>
    <property type="resolution" value="5.00 A"/>
    <property type="chains" value="Cd=1-125"/>
</dbReference>
<dbReference type="PDB" id="5AJ0">
    <property type="method" value="EM"/>
    <property type="resolution" value="3.50 A"/>
    <property type="chains" value="Ad=1-125"/>
</dbReference>
<dbReference type="PDB" id="5LKS">
    <property type="method" value="EM"/>
    <property type="resolution" value="3.60 A"/>
    <property type="chains" value="Ld=1-125"/>
</dbReference>
<dbReference type="PDB" id="5T2C">
    <property type="method" value="EM"/>
    <property type="resolution" value="3.60 A"/>
    <property type="chains" value="X=1-125"/>
</dbReference>
<dbReference type="PDB" id="6IP5">
    <property type="method" value="EM"/>
    <property type="resolution" value="3.90 A"/>
    <property type="chains" value="2X=1-125"/>
</dbReference>
<dbReference type="PDB" id="6IP6">
    <property type="method" value="EM"/>
    <property type="resolution" value="4.50 A"/>
    <property type="chains" value="2X=1-125"/>
</dbReference>
<dbReference type="PDB" id="6IP8">
    <property type="method" value="EM"/>
    <property type="resolution" value="3.90 A"/>
    <property type="chains" value="2X=1-125"/>
</dbReference>
<dbReference type="PDB" id="6LQM">
    <property type="method" value="EM"/>
    <property type="resolution" value="3.09 A"/>
    <property type="chains" value="T=1-125"/>
</dbReference>
<dbReference type="PDB" id="6LSR">
    <property type="method" value="EM"/>
    <property type="resolution" value="3.13 A"/>
    <property type="chains" value="T=1-125"/>
</dbReference>
<dbReference type="PDB" id="6LSS">
    <property type="method" value="EM"/>
    <property type="resolution" value="3.23 A"/>
    <property type="chains" value="j=1-125"/>
</dbReference>
<dbReference type="PDB" id="6LU8">
    <property type="method" value="EM"/>
    <property type="resolution" value="3.13 A"/>
    <property type="chains" value="j=1-125"/>
</dbReference>
<dbReference type="PDB" id="6OLE">
    <property type="method" value="EM"/>
    <property type="resolution" value="3.10 A"/>
    <property type="chains" value="e=18-123"/>
</dbReference>
<dbReference type="PDB" id="6OLF">
    <property type="method" value="EM"/>
    <property type="resolution" value="3.90 A"/>
    <property type="chains" value="e=18-123"/>
</dbReference>
<dbReference type="PDB" id="6OLG">
    <property type="method" value="EM"/>
    <property type="resolution" value="3.40 A"/>
    <property type="chains" value="Ad=18-123"/>
</dbReference>
<dbReference type="PDB" id="6OLI">
    <property type="method" value="EM"/>
    <property type="resolution" value="3.50 A"/>
    <property type="chains" value="e=18-123"/>
</dbReference>
<dbReference type="PDB" id="6OLZ">
    <property type="method" value="EM"/>
    <property type="resolution" value="3.90 A"/>
    <property type="chains" value="Ad=18-123"/>
</dbReference>
<dbReference type="PDB" id="6OM0">
    <property type="method" value="EM"/>
    <property type="resolution" value="3.10 A"/>
    <property type="chains" value="e=18-123"/>
</dbReference>
<dbReference type="PDB" id="6OM7">
    <property type="method" value="EM"/>
    <property type="resolution" value="3.70 A"/>
    <property type="chains" value="e=18-123"/>
</dbReference>
<dbReference type="PDB" id="6QZP">
    <property type="method" value="EM"/>
    <property type="resolution" value="2.90 A"/>
    <property type="chains" value="Ld=18-124"/>
</dbReference>
<dbReference type="PDB" id="6XA1">
    <property type="method" value="EM"/>
    <property type="resolution" value="2.80 A"/>
    <property type="chains" value="Ld=18-124"/>
</dbReference>
<dbReference type="PDB" id="6Y0G">
    <property type="method" value="EM"/>
    <property type="resolution" value="3.20 A"/>
    <property type="chains" value="Ld=1-125"/>
</dbReference>
<dbReference type="PDB" id="6Y2L">
    <property type="method" value="EM"/>
    <property type="resolution" value="3.00 A"/>
    <property type="chains" value="Ld=1-125"/>
</dbReference>
<dbReference type="PDB" id="6Y57">
    <property type="method" value="EM"/>
    <property type="resolution" value="3.50 A"/>
    <property type="chains" value="Ld=1-125"/>
</dbReference>
<dbReference type="PDB" id="6Y6X">
    <property type="method" value="EM"/>
    <property type="resolution" value="2.80 A"/>
    <property type="chains" value="Ld=18-124"/>
</dbReference>
<dbReference type="PDB" id="6Z6L">
    <property type="method" value="EM"/>
    <property type="resolution" value="3.00 A"/>
    <property type="chains" value="Ld=1-125"/>
</dbReference>
<dbReference type="PDB" id="6Z6M">
    <property type="method" value="EM"/>
    <property type="resolution" value="3.10 A"/>
    <property type="chains" value="Ld=1-125"/>
</dbReference>
<dbReference type="PDB" id="6Z6N">
    <property type="method" value="EM"/>
    <property type="resolution" value="2.90 A"/>
    <property type="chains" value="Ld=1-125"/>
</dbReference>
<dbReference type="PDB" id="6ZM7">
    <property type="method" value="EM"/>
    <property type="resolution" value="2.70 A"/>
    <property type="chains" value="Ld=1-125"/>
</dbReference>
<dbReference type="PDB" id="6ZME">
    <property type="method" value="EM"/>
    <property type="resolution" value="3.00 A"/>
    <property type="chains" value="Ld=1-125"/>
</dbReference>
<dbReference type="PDB" id="6ZMI">
    <property type="method" value="EM"/>
    <property type="resolution" value="2.60 A"/>
    <property type="chains" value="Ld=1-125"/>
</dbReference>
<dbReference type="PDB" id="6ZMO">
    <property type="method" value="EM"/>
    <property type="resolution" value="3.10 A"/>
    <property type="chains" value="Ld=1-125"/>
</dbReference>
<dbReference type="PDB" id="7BHP">
    <property type="method" value="EM"/>
    <property type="resolution" value="3.30 A"/>
    <property type="chains" value="Ld=1-125"/>
</dbReference>
<dbReference type="PDB" id="7F5S">
    <property type="method" value="EM"/>
    <property type="resolution" value="2.72 A"/>
    <property type="chains" value="Ld=1-125"/>
</dbReference>
<dbReference type="PDB" id="7OW7">
    <property type="method" value="EM"/>
    <property type="resolution" value="2.20 A"/>
    <property type="chains" value="X=1-125"/>
</dbReference>
<dbReference type="PDB" id="7XNX">
    <property type="method" value="EM"/>
    <property type="resolution" value="2.70 A"/>
    <property type="chains" value="Ld=1-125"/>
</dbReference>
<dbReference type="PDB" id="7XNY">
    <property type="method" value="EM"/>
    <property type="resolution" value="2.50 A"/>
    <property type="chains" value="Ld=1-125"/>
</dbReference>
<dbReference type="PDB" id="8A3D">
    <property type="method" value="EM"/>
    <property type="resolution" value="1.67 A"/>
    <property type="chains" value="X=1-125"/>
</dbReference>
<dbReference type="PDB" id="8FKV">
    <property type="method" value="EM"/>
    <property type="resolution" value="2.47 A"/>
    <property type="chains" value="LP=1-125"/>
</dbReference>
<dbReference type="PDB" id="8FKW">
    <property type="method" value="EM"/>
    <property type="resolution" value="2.50 A"/>
    <property type="chains" value="LP=1-125"/>
</dbReference>
<dbReference type="PDB" id="8FKX">
    <property type="method" value="EM"/>
    <property type="resolution" value="2.59 A"/>
    <property type="chains" value="LP=1-125"/>
</dbReference>
<dbReference type="PDB" id="8FKY">
    <property type="method" value="EM"/>
    <property type="resolution" value="2.67 A"/>
    <property type="chains" value="LP=1-125"/>
</dbReference>
<dbReference type="PDB" id="8FKZ">
    <property type="method" value="EM"/>
    <property type="resolution" value="3.04 A"/>
    <property type="chains" value="LP=1-125"/>
</dbReference>
<dbReference type="PDB" id="8FL2">
    <property type="method" value="EM"/>
    <property type="resolution" value="2.67 A"/>
    <property type="chains" value="LP=1-125"/>
</dbReference>
<dbReference type="PDB" id="8FL3">
    <property type="method" value="EM"/>
    <property type="resolution" value="2.53 A"/>
    <property type="chains" value="LP=1-125"/>
</dbReference>
<dbReference type="PDB" id="8FL4">
    <property type="method" value="EM"/>
    <property type="resolution" value="2.89 A"/>
    <property type="chains" value="LP=1-125"/>
</dbReference>
<dbReference type="PDB" id="8FL6">
    <property type="method" value="EM"/>
    <property type="resolution" value="2.62 A"/>
    <property type="chains" value="LP=1-125"/>
</dbReference>
<dbReference type="PDB" id="8FL7">
    <property type="method" value="EM"/>
    <property type="resolution" value="2.55 A"/>
    <property type="chains" value="LP=1-125"/>
</dbReference>
<dbReference type="PDB" id="8FL9">
    <property type="method" value="EM"/>
    <property type="resolution" value="2.75 A"/>
    <property type="chains" value="LP=1-125"/>
</dbReference>
<dbReference type="PDB" id="8FLA">
    <property type="method" value="EM"/>
    <property type="resolution" value="2.63 A"/>
    <property type="chains" value="LP=1-125"/>
</dbReference>
<dbReference type="PDB" id="8FLB">
    <property type="method" value="EM"/>
    <property type="resolution" value="2.55 A"/>
    <property type="chains" value="LP=1-125"/>
</dbReference>
<dbReference type="PDB" id="8FLC">
    <property type="method" value="EM"/>
    <property type="resolution" value="2.76 A"/>
    <property type="chains" value="LP=1-125"/>
</dbReference>
<dbReference type="PDB" id="8FLD">
    <property type="method" value="EM"/>
    <property type="resolution" value="2.58 A"/>
    <property type="chains" value="LP=1-125"/>
</dbReference>
<dbReference type="PDB" id="8FLE">
    <property type="method" value="EM"/>
    <property type="resolution" value="2.48 A"/>
    <property type="chains" value="LP=1-125"/>
</dbReference>
<dbReference type="PDB" id="8FLF">
    <property type="method" value="EM"/>
    <property type="resolution" value="2.65 A"/>
    <property type="chains" value="LP=1-125"/>
</dbReference>
<dbReference type="PDB" id="8G5Y">
    <property type="method" value="EM"/>
    <property type="resolution" value="2.29 A"/>
    <property type="chains" value="Ld=1-125"/>
</dbReference>
<dbReference type="PDB" id="8G5Z">
    <property type="method" value="EM"/>
    <property type="resolution" value="2.64 A"/>
    <property type="chains" value="Ld=18-124"/>
</dbReference>
<dbReference type="PDB" id="8G60">
    <property type="method" value="EM"/>
    <property type="resolution" value="2.54 A"/>
    <property type="chains" value="Ld=1-125"/>
</dbReference>
<dbReference type="PDB" id="8G61">
    <property type="method" value="EM"/>
    <property type="resolution" value="2.94 A"/>
    <property type="chains" value="Ld=1-125"/>
</dbReference>
<dbReference type="PDB" id="8G6J">
    <property type="method" value="EM"/>
    <property type="resolution" value="2.80 A"/>
    <property type="chains" value="Ld=1-125"/>
</dbReference>
<dbReference type="PDB" id="8GLP">
    <property type="method" value="EM"/>
    <property type="resolution" value="1.67 A"/>
    <property type="chains" value="Ld=1-125"/>
</dbReference>
<dbReference type="PDB" id="8IDT">
    <property type="method" value="EM"/>
    <property type="resolution" value="2.80 A"/>
    <property type="chains" value="j=1-125"/>
</dbReference>
<dbReference type="PDB" id="8IDY">
    <property type="method" value="EM"/>
    <property type="resolution" value="3.00 A"/>
    <property type="chains" value="j=1-125"/>
</dbReference>
<dbReference type="PDB" id="8IE3">
    <property type="method" value="EM"/>
    <property type="resolution" value="3.30 A"/>
    <property type="chains" value="j=1-125"/>
</dbReference>
<dbReference type="PDB" id="8IFD">
    <property type="method" value="EM"/>
    <property type="resolution" value="2.59 A"/>
    <property type="chains" value="2X=1-125"/>
</dbReference>
<dbReference type="PDB" id="8IFE">
    <property type="method" value="EM"/>
    <property type="resolution" value="2.57 A"/>
    <property type="chains" value="2X=1-125"/>
</dbReference>
<dbReference type="PDB" id="8INE">
    <property type="method" value="EM"/>
    <property type="resolution" value="3.20 A"/>
    <property type="chains" value="j=1-125"/>
</dbReference>
<dbReference type="PDB" id="8INF">
    <property type="method" value="EM"/>
    <property type="resolution" value="3.00 A"/>
    <property type="chains" value="j=1-125"/>
</dbReference>
<dbReference type="PDB" id="8INK">
    <property type="method" value="EM"/>
    <property type="resolution" value="3.20 A"/>
    <property type="chains" value="j=1-125"/>
</dbReference>
<dbReference type="PDB" id="8IPD">
    <property type="method" value="EM"/>
    <property type="resolution" value="3.20 A"/>
    <property type="chains" value="j=1-125"/>
</dbReference>
<dbReference type="PDB" id="8IPX">
    <property type="method" value="EM"/>
    <property type="resolution" value="4.30 A"/>
    <property type="chains" value="j=1-125"/>
</dbReference>
<dbReference type="PDB" id="8IPY">
    <property type="method" value="EM"/>
    <property type="resolution" value="3.20 A"/>
    <property type="chains" value="j=1-125"/>
</dbReference>
<dbReference type="PDB" id="8IR1">
    <property type="method" value="EM"/>
    <property type="resolution" value="3.30 A"/>
    <property type="chains" value="j=1-125"/>
</dbReference>
<dbReference type="PDB" id="8IR3">
    <property type="method" value="EM"/>
    <property type="resolution" value="3.50 A"/>
    <property type="chains" value="j=1-125"/>
</dbReference>
<dbReference type="PDB" id="8JDJ">
    <property type="method" value="EM"/>
    <property type="resolution" value="2.50 A"/>
    <property type="chains" value="i=1-125"/>
</dbReference>
<dbReference type="PDB" id="8JDK">
    <property type="method" value="EM"/>
    <property type="resolution" value="2.26 A"/>
    <property type="chains" value="i=1-125"/>
</dbReference>
<dbReference type="PDB" id="8JDL">
    <property type="method" value="EM"/>
    <property type="resolution" value="2.42 A"/>
    <property type="chains" value="i=1-125"/>
</dbReference>
<dbReference type="PDB" id="8JDM">
    <property type="method" value="EM"/>
    <property type="resolution" value="2.67 A"/>
    <property type="chains" value="i=1-125"/>
</dbReference>
<dbReference type="PDB" id="8K2C">
    <property type="method" value="EM"/>
    <property type="resolution" value="2.40 A"/>
    <property type="chains" value="Ld=1-125"/>
</dbReference>
<dbReference type="PDB" id="8OHD">
    <property type="method" value="EM"/>
    <property type="resolution" value="3.10 A"/>
    <property type="chains" value="Ld=1-125"/>
</dbReference>
<dbReference type="PDB" id="8OJ0">
    <property type="method" value="EM"/>
    <property type="resolution" value="3.30 A"/>
    <property type="chains" value="Ld=1-125"/>
</dbReference>
<dbReference type="PDB" id="8OJ5">
    <property type="method" value="EM"/>
    <property type="resolution" value="2.90 A"/>
    <property type="chains" value="Ld=1-125"/>
</dbReference>
<dbReference type="PDB" id="8OJ8">
    <property type="method" value="EM"/>
    <property type="resolution" value="3.30 A"/>
    <property type="chains" value="Ld=1-125"/>
</dbReference>
<dbReference type="PDB" id="8QFD">
    <property type="method" value="EM"/>
    <property type="resolution" value="2.20 A"/>
    <property type="chains" value="d=1-125"/>
</dbReference>
<dbReference type="PDB" id="8QOI">
    <property type="method" value="EM"/>
    <property type="resolution" value="1.90 A"/>
    <property type="chains" value="Ld=1-125"/>
</dbReference>
<dbReference type="PDB" id="8QYX">
    <property type="method" value="EM"/>
    <property type="resolution" value="1.78 A"/>
    <property type="chains" value="X1=1-125"/>
</dbReference>
<dbReference type="PDB" id="8RL2">
    <property type="method" value="EM"/>
    <property type="resolution" value="2.84 A"/>
    <property type="chains" value="Ld=1-125"/>
</dbReference>
<dbReference type="PDB" id="8UKB">
    <property type="method" value="EM"/>
    <property type="resolution" value="3.05 A"/>
    <property type="chains" value="Ld=18-124"/>
</dbReference>
<dbReference type="PDB" id="8XSX">
    <property type="method" value="EM"/>
    <property type="resolution" value="2.40 A"/>
    <property type="chains" value="Ld=1-125"/>
</dbReference>
<dbReference type="PDB" id="8XSY">
    <property type="method" value="EM"/>
    <property type="resolution" value="3.00 A"/>
    <property type="chains" value="Ld=1-125"/>
</dbReference>
<dbReference type="PDB" id="8XSZ">
    <property type="method" value="EM"/>
    <property type="resolution" value="3.20 A"/>
    <property type="chains" value="Ld=1-125"/>
</dbReference>
<dbReference type="PDB" id="8Y0W">
    <property type="method" value="EM"/>
    <property type="resolution" value="3.40 A"/>
    <property type="chains" value="Ld=1-125"/>
</dbReference>
<dbReference type="PDB" id="8Y0X">
    <property type="method" value="EM"/>
    <property type="resolution" value="3.30 A"/>
    <property type="chains" value="Ld=1-125"/>
</dbReference>
<dbReference type="PDB" id="8YOO">
    <property type="method" value="EM"/>
    <property type="resolution" value="2.00 A"/>
    <property type="chains" value="Ld=1-125"/>
</dbReference>
<dbReference type="PDB" id="8YOP">
    <property type="method" value="EM"/>
    <property type="resolution" value="2.20 A"/>
    <property type="chains" value="Ld=1-125"/>
</dbReference>
<dbReference type="PDB" id="9C3H">
    <property type="method" value="EM"/>
    <property type="resolution" value="2.00 A"/>
    <property type="chains" value="Ld=1-125"/>
</dbReference>
<dbReference type="PDB" id="9G8M">
    <property type="method" value="EM"/>
    <property type="resolution" value="3.30 A"/>
    <property type="chains" value="Ld=1-125"/>
</dbReference>
<dbReference type="PDB" id="9GMO">
    <property type="method" value="EM"/>
    <property type="resolution" value="2.59 A"/>
    <property type="chains" value="X=1-125"/>
</dbReference>
<dbReference type="PDBsum" id="4UG0"/>
<dbReference type="PDBsum" id="4V6X"/>
<dbReference type="PDBsum" id="5AJ0"/>
<dbReference type="PDBsum" id="5LKS"/>
<dbReference type="PDBsum" id="5T2C"/>
<dbReference type="PDBsum" id="6IP5"/>
<dbReference type="PDBsum" id="6IP6"/>
<dbReference type="PDBsum" id="6IP8"/>
<dbReference type="PDBsum" id="6LQM"/>
<dbReference type="PDBsum" id="6LSR"/>
<dbReference type="PDBsum" id="6LSS"/>
<dbReference type="PDBsum" id="6LU8"/>
<dbReference type="PDBsum" id="6OLE"/>
<dbReference type="PDBsum" id="6OLF"/>
<dbReference type="PDBsum" id="6OLG"/>
<dbReference type="PDBsum" id="6OLI"/>
<dbReference type="PDBsum" id="6OLZ"/>
<dbReference type="PDBsum" id="6OM0"/>
<dbReference type="PDBsum" id="6OM7"/>
<dbReference type="PDBsum" id="6QZP"/>
<dbReference type="PDBsum" id="6XA1"/>
<dbReference type="PDBsum" id="6Y0G"/>
<dbReference type="PDBsum" id="6Y2L"/>
<dbReference type="PDBsum" id="6Y57"/>
<dbReference type="PDBsum" id="6Y6X"/>
<dbReference type="PDBsum" id="6Z6L"/>
<dbReference type="PDBsum" id="6Z6M"/>
<dbReference type="PDBsum" id="6Z6N"/>
<dbReference type="PDBsum" id="6ZM7"/>
<dbReference type="PDBsum" id="6ZME"/>
<dbReference type="PDBsum" id="6ZMI"/>
<dbReference type="PDBsum" id="6ZMO"/>
<dbReference type="PDBsum" id="7BHP"/>
<dbReference type="PDBsum" id="7F5S"/>
<dbReference type="PDBsum" id="7OW7"/>
<dbReference type="PDBsum" id="7XNX"/>
<dbReference type="PDBsum" id="7XNY"/>
<dbReference type="PDBsum" id="8A3D"/>
<dbReference type="PDBsum" id="8FKV"/>
<dbReference type="PDBsum" id="8FKW"/>
<dbReference type="PDBsum" id="8FKX"/>
<dbReference type="PDBsum" id="8FKY"/>
<dbReference type="PDBsum" id="8FKZ"/>
<dbReference type="PDBsum" id="8FL2"/>
<dbReference type="PDBsum" id="8FL3"/>
<dbReference type="PDBsum" id="8FL4"/>
<dbReference type="PDBsum" id="8FL6"/>
<dbReference type="PDBsum" id="8FL7"/>
<dbReference type="PDBsum" id="8FL9"/>
<dbReference type="PDBsum" id="8FLA"/>
<dbReference type="PDBsum" id="8FLB"/>
<dbReference type="PDBsum" id="8FLC"/>
<dbReference type="PDBsum" id="8FLD"/>
<dbReference type="PDBsum" id="8FLE"/>
<dbReference type="PDBsum" id="8FLF"/>
<dbReference type="PDBsum" id="8G5Y"/>
<dbReference type="PDBsum" id="8G5Z"/>
<dbReference type="PDBsum" id="8G60"/>
<dbReference type="PDBsum" id="8G61"/>
<dbReference type="PDBsum" id="8G6J"/>
<dbReference type="PDBsum" id="8GLP"/>
<dbReference type="PDBsum" id="8IDT"/>
<dbReference type="PDBsum" id="8IDY"/>
<dbReference type="PDBsum" id="8IE3"/>
<dbReference type="PDBsum" id="8IFD"/>
<dbReference type="PDBsum" id="8IFE"/>
<dbReference type="PDBsum" id="8INE"/>
<dbReference type="PDBsum" id="8INF"/>
<dbReference type="PDBsum" id="8INK"/>
<dbReference type="PDBsum" id="8IPD"/>
<dbReference type="PDBsum" id="8IPX"/>
<dbReference type="PDBsum" id="8IPY"/>
<dbReference type="PDBsum" id="8IR1"/>
<dbReference type="PDBsum" id="8IR3"/>
<dbReference type="PDBsum" id="8JDJ"/>
<dbReference type="PDBsum" id="8JDK"/>
<dbReference type="PDBsum" id="8JDL"/>
<dbReference type="PDBsum" id="8JDM"/>
<dbReference type="PDBsum" id="8K2C"/>
<dbReference type="PDBsum" id="8OHD"/>
<dbReference type="PDBsum" id="8OJ0"/>
<dbReference type="PDBsum" id="8OJ5"/>
<dbReference type="PDBsum" id="8OJ8"/>
<dbReference type="PDBsum" id="8QFD"/>
<dbReference type="PDBsum" id="8QOI"/>
<dbReference type="PDBsum" id="8QYX"/>
<dbReference type="PDBsum" id="8RL2"/>
<dbReference type="PDBsum" id="8UKB"/>
<dbReference type="PDBsum" id="8XSX"/>
<dbReference type="PDBsum" id="8XSY"/>
<dbReference type="PDBsum" id="8XSZ"/>
<dbReference type="PDBsum" id="8Y0W"/>
<dbReference type="PDBsum" id="8Y0X"/>
<dbReference type="PDBsum" id="8YOO"/>
<dbReference type="PDBsum" id="8YOP"/>
<dbReference type="PDBsum" id="9C3H"/>
<dbReference type="PDBsum" id="9G8M"/>
<dbReference type="PDBsum" id="9GMO"/>
<dbReference type="EMDB" id="EMD-0948"/>
<dbReference type="EMDB" id="EMD-0963"/>
<dbReference type="EMDB" id="EMD-0964"/>
<dbReference type="EMDB" id="EMD-0978"/>
<dbReference type="EMDB" id="EMD-10668"/>
<dbReference type="EMDB" id="EMD-10674"/>
<dbReference type="EMDB" id="EMD-10690"/>
<dbReference type="EMDB" id="EMD-10709"/>
<dbReference type="EMDB" id="EMD-11098"/>
<dbReference type="EMDB" id="EMD-11099"/>
<dbReference type="EMDB" id="EMD-11100"/>
<dbReference type="EMDB" id="EMD-11288"/>
<dbReference type="EMDB" id="EMD-11289"/>
<dbReference type="EMDB" id="EMD-11292"/>
<dbReference type="EMDB" id="EMD-11299"/>
<dbReference type="EMDB" id="EMD-12189"/>
<dbReference type="EMDB" id="EMD-13094"/>
<dbReference type="EMDB" id="EMD-15113"/>
<dbReference type="EMDB" id="EMD-16880"/>
<dbReference type="EMDB" id="EMD-16902"/>
<dbReference type="EMDB" id="EMD-16905"/>
<dbReference type="EMDB" id="EMD-16908"/>
<dbReference type="EMDB" id="EMD-18382"/>
<dbReference type="EMDB" id="EMD-18539"/>
<dbReference type="EMDB" id="EMD-18765"/>
<dbReference type="EMDB" id="EMD-19330"/>
<dbReference type="EMDB" id="EMD-29258"/>
<dbReference type="EMDB" id="EMD-29259"/>
<dbReference type="EMDB" id="EMD-29260"/>
<dbReference type="EMDB" id="EMD-29261"/>
<dbReference type="EMDB" id="EMD-29262"/>
<dbReference type="EMDB" id="EMD-29265"/>
<dbReference type="EMDB" id="EMD-29266"/>
<dbReference type="EMDB" id="EMD-29267"/>
<dbReference type="EMDB" id="EMD-29269"/>
<dbReference type="EMDB" id="EMD-29271"/>
<dbReference type="EMDB" id="EMD-29272"/>
<dbReference type="EMDB" id="EMD-29273"/>
<dbReference type="EMDB" id="EMD-29274"/>
<dbReference type="EMDB" id="EMD-29275"/>
<dbReference type="EMDB" id="EMD-29276"/>
<dbReference type="EMDB" id="EMD-29277"/>
<dbReference type="EMDB" id="EMD-29757"/>
<dbReference type="EMDB" id="EMD-29758"/>
<dbReference type="EMDB" id="EMD-29759"/>
<dbReference type="EMDB" id="EMD-29760"/>
<dbReference type="EMDB" id="EMD-29771"/>
<dbReference type="EMDB" id="EMD-31465"/>
<dbReference type="EMDB" id="EMD-33329"/>
<dbReference type="EMDB" id="EMD-33330"/>
<dbReference type="EMDB" id="EMD-35370"/>
<dbReference type="EMDB" id="EMD-35371"/>
<dbReference type="EMDB" id="EMD-35375"/>
<dbReference type="EMDB" id="EMD-35413"/>
<dbReference type="EMDB" id="EMD-35414"/>
<dbReference type="EMDB" id="EMD-35596"/>
<dbReference type="EMDB" id="EMD-35597"/>
<dbReference type="EMDB" id="EMD-35599"/>
<dbReference type="EMDB" id="EMD-35639"/>
<dbReference type="EMDB" id="EMD-35649"/>
<dbReference type="EMDB" id="EMD-35651"/>
<dbReference type="EMDB" id="EMD-35672"/>
<dbReference type="EMDB" id="EMD-35673"/>
<dbReference type="EMDB" id="EMD-36178"/>
<dbReference type="EMDB" id="EMD-36179"/>
<dbReference type="EMDB" id="EMD-36180"/>
<dbReference type="EMDB" id="EMD-36181"/>
<dbReference type="EMDB" id="EMD-36838"/>
<dbReference type="EMDB" id="EMD-38629"/>
<dbReference type="EMDB" id="EMD-38630"/>
<dbReference type="EMDB" id="EMD-38631"/>
<dbReference type="EMDB" id="EMD-3883"/>
<dbReference type="EMDB" id="EMD-39455"/>
<dbReference type="EMDB" id="EMD-39456"/>
<dbReference type="EMDB" id="EMD-40205"/>
<dbReference type="EMDB" id="EMD-4070"/>
<dbReference type="EMDB" id="EMD-42351"/>
<dbReference type="EMDB" id="EMD-45170"/>
<dbReference type="EMDB" id="EMD-51132"/>
<dbReference type="EMDB" id="EMD-51452"/>
<dbReference type="EMDB" id="EMD-9701"/>
<dbReference type="EMDB" id="EMD-9702"/>
<dbReference type="EMDB" id="EMD-9703"/>
<dbReference type="SMR" id="P62899"/>
<dbReference type="BioGRID" id="112079">
    <property type="interactions" value="696"/>
</dbReference>
<dbReference type="ComplexPortal" id="CPX-5183">
    <property type="entry name" value="60S cytosolic large ribosomal subunit"/>
</dbReference>
<dbReference type="ComplexPortal" id="CPX-7664">
    <property type="entry name" value="60S cytosolic large ribosomal subunit, testis-specific variant"/>
</dbReference>
<dbReference type="ComplexPortal" id="CPX-7665">
    <property type="entry name" value="60S cytosolic large ribosomal subunit, striated muscle variant"/>
</dbReference>
<dbReference type="CORUM" id="P62899"/>
<dbReference type="FunCoup" id="P62899">
    <property type="interactions" value="1505"/>
</dbReference>
<dbReference type="IntAct" id="P62899">
    <property type="interactions" value="284"/>
</dbReference>
<dbReference type="MINT" id="P62899"/>
<dbReference type="STRING" id="9606.ENSP00000386717"/>
<dbReference type="GlyGen" id="P62899">
    <property type="glycosylation" value="1 site, 1 O-linked glycan (1 site)"/>
</dbReference>
<dbReference type="iPTMnet" id="P62899"/>
<dbReference type="MetOSite" id="P62899"/>
<dbReference type="PhosphoSitePlus" id="P62899"/>
<dbReference type="SwissPalm" id="P62899"/>
<dbReference type="BioMuta" id="RPL31"/>
<dbReference type="DMDM" id="51702807"/>
<dbReference type="jPOST" id="P62899"/>
<dbReference type="MassIVE" id="P62899"/>
<dbReference type="PaxDb" id="9606-ENSP00000386717"/>
<dbReference type="PeptideAtlas" id="P62899"/>
<dbReference type="ProteomicsDB" id="57447">
    <molecule id="P62899-1"/>
</dbReference>
<dbReference type="ProteomicsDB" id="57448">
    <molecule id="P62899-2"/>
</dbReference>
<dbReference type="ProteomicsDB" id="57449">
    <molecule id="P62899-3"/>
</dbReference>
<dbReference type="Pumba" id="P62899"/>
<dbReference type="TopDownProteomics" id="P62899-1">
    <molecule id="P62899-1"/>
</dbReference>
<dbReference type="Antibodypedia" id="32888">
    <property type="antibodies" value="145 antibodies from 27 providers"/>
</dbReference>
<dbReference type="DNASU" id="6160"/>
<dbReference type="Ensembl" id="ENST00000264258.8">
    <molecule id="P62899-1"/>
    <property type="protein sequence ID" value="ENSP00000264258.3"/>
    <property type="gene ID" value="ENSG00000071082.11"/>
</dbReference>
<dbReference type="Ensembl" id="ENST00000409028.8">
    <molecule id="P62899-2"/>
    <property type="protein sequence ID" value="ENSP00000386717.3"/>
    <property type="gene ID" value="ENSG00000071082.11"/>
</dbReference>
<dbReference type="Ensembl" id="ENST00000409320.7">
    <molecule id="P62899-3"/>
    <property type="protein sequence ID" value="ENSP00000387163.3"/>
    <property type="gene ID" value="ENSG00000071082.11"/>
</dbReference>
<dbReference type="Ensembl" id="ENST00000409733.5">
    <molecule id="P62899-1"/>
    <property type="protein sequence ID" value="ENSP00000386681.1"/>
    <property type="gene ID" value="ENSG00000071082.11"/>
</dbReference>
<dbReference type="GeneID" id="6160"/>
<dbReference type="KEGG" id="hsa:6160"/>
<dbReference type="MANE-Select" id="ENST00000264258.8">
    <property type="protein sequence ID" value="ENSP00000264258.3"/>
    <property type="RefSeq nucleotide sequence ID" value="NM_000993.5"/>
    <property type="RefSeq protein sequence ID" value="NP_000984.1"/>
</dbReference>
<dbReference type="UCSC" id="uc002taq.5">
    <molecule id="P62899-1"/>
    <property type="organism name" value="human"/>
</dbReference>
<dbReference type="AGR" id="HGNC:10334"/>
<dbReference type="CTD" id="6160"/>
<dbReference type="DisGeNET" id="6160"/>
<dbReference type="GeneCards" id="RPL31"/>
<dbReference type="HGNC" id="HGNC:10334">
    <property type="gene designation" value="RPL31"/>
</dbReference>
<dbReference type="HPA" id="ENSG00000071082">
    <property type="expression patterns" value="Low tissue specificity"/>
</dbReference>
<dbReference type="MalaCards" id="RPL31"/>
<dbReference type="MIM" id="617415">
    <property type="type" value="gene"/>
</dbReference>
<dbReference type="neXtProt" id="NX_P62899"/>
<dbReference type="OpenTargets" id="ENSG00000071082"/>
<dbReference type="Orphanet" id="124">
    <property type="disease" value="Diamond-Blackfan anemia"/>
</dbReference>
<dbReference type="PharmGKB" id="PA34715"/>
<dbReference type="VEuPathDB" id="HostDB:ENSG00000071082"/>
<dbReference type="eggNOG" id="KOG0893">
    <property type="taxonomic scope" value="Eukaryota"/>
</dbReference>
<dbReference type="GeneTree" id="ENSGT00950000183030"/>
<dbReference type="InParanoid" id="P62899"/>
<dbReference type="OMA" id="EVWKQGI"/>
<dbReference type="OrthoDB" id="9532992at2759"/>
<dbReference type="PAN-GO" id="P62899">
    <property type="GO annotations" value="3 GO annotations based on evolutionary models"/>
</dbReference>
<dbReference type="PhylomeDB" id="P62899"/>
<dbReference type="TreeFam" id="TF314858"/>
<dbReference type="PathwayCommons" id="P62899"/>
<dbReference type="Reactome" id="R-HSA-156827">
    <property type="pathway name" value="L13a-mediated translational silencing of Ceruloplasmin expression"/>
</dbReference>
<dbReference type="Reactome" id="R-HSA-156902">
    <property type="pathway name" value="Peptide chain elongation"/>
</dbReference>
<dbReference type="Reactome" id="R-HSA-1799339">
    <property type="pathway name" value="SRP-dependent cotranslational protein targeting to membrane"/>
</dbReference>
<dbReference type="Reactome" id="R-HSA-192823">
    <property type="pathway name" value="Viral mRNA Translation"/>
</dbReference>
<dbReference type="Reactome" id="R-HSA-2408557">
    <property type="pathway name" value="Selenocysteine synthesis"/>
</dbReference>
<dbReference type="Reactome" id="R-HSA-6791226">
    <property type="pathway name" value="Major pathway of rRNA processing in the nucleolus and cytosol"/>
</dbReference>
<dbReference type="Reactome" id="R-HSA-72689">
    <property type="pathway name" value="Formation of a pool of free 40S subunits"/>
</dbReference>
<dbReference type="Reactome" id="R-HSA-72706">
    <property type="pathway name" value="GTP hydrolysis and joining of the 60S ribosomal subunit"/>
</dbReference>
<dbReference type="Reactome" id="R-HSA-72764">
    <property type="pathway name" value="Eukaryotic Translation Termination"/>
</dbReference>
<dbReference type="Reactome" id="R-HSA-9010553">
    <property type="pathway name" value="Regulation of expression of SLITs and ROBOs"/>
</dbReference>
<dbReference type="Reactome" id="R-HSA-9633012">
    <property type="pathway name" value="Response of EIF2AK4 (GCN2) to amino acid deficiency"/>
</dbReference>
<dbReference type="Reactome" id="R-HSA-975956">
    <property type="pathway name" value="Nonsense Mediated Decay (NMD) independent of the Exon Junction Complex (EJC)"/>
</dbReference>
<dbReference type="Reactome" id="R-HSA-975957">
    <property type="pathway name" value="Nonsense Mediated Decay (NMD) enhanced by the Exon Junction Complex (EJC)"/>
</dbReference>
<dbReference type="SignaLink" id="P62899"/>
<dbReference type="SIGNOR" id="P62899"/>
<dbReference type="BioGRID-ORCS" id="6160">
    <property type="hits" value="842 hits in 1138 CRISPR screens"/>
</dbReference>
<dbReference type="CD-CODE" id="232F8A39">
    <property type="entry name" value="P-body"/>
</dbReference>
<dbReference type="CD-CODE" id="91857CE7">
    <property type="entry name" value="Nucleolus"/>
</dbReference>
<dbReference type="ChiTaRS" id="RPL31">
    <property type="organism name" value="human"/>
</dbReference>
<dbReference type="GeneWiki" id="60S_ribosomal_protein_L31"/>
<dbReference type="GenomeRNAi" id="6160"/>
<dbReference type="Pharos" id="P62899">
    <property type="development level" value="Tbio"/>
</dbReference>
<dbReference type="PRO" id="PR:P62899"/>
<dbReference type="Proteomes" id="UP000005640">
    <property type="component" value="Chromosome 2"/>
</dbReference>
<dbReference type="RNAct" id="P62899">
    <property type="molecule type" value="protein"/>
</dbReference>
<dbReference type="Bgee" id="ENSG00000071082">
    <property type="expression patterns" value="Expressed in upper leg skin and 207 other cell types or tissues"/>
</dbReference>
<dbReference type="ExpressionAtlas" id="P62899">
    <property type="expression patterns" value="baseline and differential"/>
</dbReference>
<dbReference type="GO" id="GO:0005737">
    <property type="term" value="C:cytoplasm"/>
    <property type="evidence" value="ECO:0000303"/>
    <property type="project" value="ComplexPortal"/>
</dbReference>
<dbReference type="GO" id="GO:0005829">
    <property type="term" value="C:cytosol"/>
    <property type="evidence" value="ECO:0000304"/>
    <property type="project" value="Reactome"/>
</dbReference>
<dbReference type="GO" id="GO:0022625">
    <property type="term" value="C:cytosolic large ribosomal subunit"/>
    <property type="evidence" value="ECO:0000314"/>
    <property type="project" value="UniProtKB"/>
</dbReference>
<dbReference type="GO" id="GO:0022626">
    <property type="term" value="C:cytosolic ribosome"/>
    <property type="evidence" value="ECO:0000314"/>
    <property type="project" value="FlyBase"/>
</dbReference>
<dbReference type="GO" id="GO:0070062">
    <property type="term" value="C:extracellular exosome"/>
    <property type="evidence" value="ECO:0007005"/>
    <property type="project" value="UniProtKB"/>
</dbReference>
<dbReference type="GO" id="GO:0005925">
    <property type="term" value="C:focal adhesion"/>
    <property type="evidence" value="ECO:0007005"/>
    <property type="project" value="UniProtKB"/>
</dbReference>
<dbReference type="GO" id="GO:0016020">
    <property type="term" value="C:membrane"/>
    <property type="evidence" value="ECO:0007005"/>
    <property type="project" value="UniProtKB"/>
</dbReference>
<dbReference type="GO" id="GO:0005654">
    <property type="term" value="C:nucleoplasm"/>
    <property type="evidence" value="ECO:0007669"/>
    <property type="project" value="Ensembl"/>
</dbReference>
<dbReference type="GO" id="GO:0045202">
    <property type="term" value="C:synapse"/>
    <property type="evidence" value="ECO:0007669"/>
    <property type="project" value="Ensembl"/>
</dbReference>
<dbReference type="GO" id="GO:0003723">
    <property type="term" value="F:RNA binding"/>
    <property type="evidence" value="ECO:0007005"/>
    <property type="project" value="UniProtKB"/>
</dbReference>
<dbReference type="GO" id="GO:0003735">
    <property type="term" value="F:structural constituent of ribosome"/>
    <property type="evidence" value="ECO:0000314"/>
    <property type="project" value="UniProtKB"/>
</dbReference>
<dbReference type="GO" id="GO:0002181">
    <property type="term" value="P:cytoplasmic translation"/>
    <property type="evidence" value="ECO:0000314"/>
    <property type="project" value="UniProtKB"/>
</dbReference>
<dbReference type="GO" id="GO:0006412">
    <property type="term" value="P:translation"/>
    <property type="evidence" value="ECO:0000304"/>
    <property type="project" value="ProtInc"/>
</dbReference>
<dbReference type="CDD" id="cd00463">
    <property type="entry name" value="Ribosomal_L31e"/>
    <property type="match status" value="1"/>
</dbReference>
<dbReference type="FunFam" id="3.10.440.10:FF:000001">
    <property type="entry name" value="60S ribosomal protein L31"/>
    <property type="match status" value="1"/>
</dbReference>
<dbReference type="Gene3D" id="3.10.440.10">
    <property type="match status" value="1"/>
</dbReference>
<dbReference type="InterPro" id="IPR000054">
    <property type="entry name" value="Ribosomal_eL31"/>
</dbReference>
<dbReference type="InterPro" id="IPR020052">
    <property type="entry name" value="Ribosomal_eL31_CS"/>
</dbReference>
<dbReference type="InterPro" id="IPR023621">
    <property type="entry name" value="Ribosomal_eL31_dom_sf"/>
</dbReference>
<dbReference type="PANTHER" id="PTHR10956">
    <property type="entry name" value="60S RIBOSOMAL PROTEIN L31"/>
    <property type="match status" value="1"/>
</dbReference>
<dbReference type="PANTHER" id="PTHR10956:SF0">
    <property type="entry name" value="60S RIBOSOMAL PROTEIN L31"/>
    <property type="match status" value="1"/>
</dbReference>
<dbReference type="Pfam" id="PF01198">
    <property type="entry name" value="Ribosomal_L31e"/>
    <property type="match status" value="1"/>
</dbReference>
<dbReference type="SMART" id="SM01380">
    <property type="entry name" value="Ribosomal_L31e"/>
    <property type="match status" value="1"/>
</dbReference>
<dbReference type="SUPFAM" id="SSF54575">
    <property type="entry name" value="Ribosomal protein L31e"/>
    <property type="match status" value="1"/>
</dbReference>
<dbReference type="PROSITE" id="PS01144">
    <property type="entry name" value="RIBOSOMAL_L31E"/>
    <property type="match status" value="1"/>
</dbReference>
<proteinExistence type="evidence at protein level"/>
<accession>P62899</accession>
<accession>B7Z4K2</accession>
<accession>D3DVJ4</accession>
<accession>P12947</accession>
<accession>Q53SQ5</accession>
<accession>Q6IRZ0</accession>
<accession>Q6LBJ6</accession>
<name>RL31_HUMAN</name>
<evidence type="ECO:0000250" key="1">
    <source>
        <dbReference type="UniProtKB" id="P62900"/>
    </source>
</evidence>
<evidence type="ECO:0000269" key="2">
    <source>
    </source>
</evidence>
<evidence type="ECO:0000269" key="3">
    <source>
    </source>
</evidence>
<evidence type="ECO:0000303" key="4">
    <source>
    </source>
</evidence>
<evidence type="ECO:0000303" key="5">
    <source>
    </source>
</evidence>
<evidence type="ECO:0000303" key="6">
    <source>
    </source>
</evidence>
<evidence type="ECO:0000305" key="7"/>
<evidence type="ECO:0007744" key="8">
    <source>
        <dbReference type="PDB" id="6LQM"/>
    </source>
</evidence>
<evidence type="ECO:0007744" key="9">
    <source>
        <dbReference type="PDB" id="6LSR"/>
    </source>
</evidence>
<evidence type="ECO:0007744" key="10">
    <source>
        <dbReference type="PDB" id="6LSS"/>
    </source>
</evidence>
<evidence type="ECO:0007744" key="11">
    <source>
        <dbReference type="PDB" id="6LU8"/>
    </source>
</evidence>
<evidence type="ECO:0007744" key="12">
    <source>
    </source>
</evidence>
<evidence type="ECO:0007744" key="13">
    <source>
    </source>
</evidence>
<evidence type="ECO:0007744" key="14">
    <source>
    </source>
</evidence>
<evidence type="ECO:0007744" key="15">
    <source>
    </source>
</evidence>
<evidence type="ECO:0007744" key="16">
    <source>
    </source>
</evidence>
<protein>
    <recommendedName>
        <fullName evidence="6">Large ribosomal subunit protein eL31</fullName>
    </recommendedName>
    <alternativeName>
        <fullName>60S ribosomal protein L31</fullName>
    </alternativeName>
</protein>
<reference key="1">
    <citation type="journal article" date="1989" name="Nucleic Acids Res.">
        <title>cDNA sequence of human ribosomal protein L31.</title>
        <authorList>
            <person name="Nobori T."/>
            <person name="Hexdall L.E."/>
            <person name="Carson D.A."/>
        </authorList>
    </citation>
    <scope>NUCLEOTIDE SEQUENCE [MRNA] (ISOFORM 1)</scope>
</reference>
<reference key="2">
    <citation type="journal article" date="2002" name="Genome Res.">
        <title>The human ribosomal protein genes: sequencing and comparative analysis of 73 genes.</title>
        <authorList>
            <person name="Yoshihama M."/>
            <person name="Uechi T."/>
            <person name="Asakawa S."/>
            <person name="Kawasaki K."/>
            <person name="Kato S."/>
            <person name="Higa S."/>
            <person name="Maeda N."/>
            <person name="Minoshima S."/>
            <person name="Tanaka T."/>
            <person name="Shimizu N."/>
            <person name="Kenmochi N."/>
        </authorList>
    </citation>
    <scope>NUCLEOTIDE SEQUENCE [GENOMIC DNA]</scope>
</reference>
<reference key="3">
    <citation type="journal article" date="2004" name="Nat. Genet.">
        <title>Complete sequencing and characterization of 21,243 full-length human cDNAs.</title>
        <authorList>
            <person name="Ota T."/>
            <person name="Suzuki Y."/>
            <person name="Nishikawa T."/>
            <person name="Otsuki T."/>
            <person name="Sugiyama T."/>
            <person name="Irie R."/>
            <person name="Wakamatsu A."/>
            <person name="Hayashi K."/>
            <person name="Sato H."/>
            <person name="Nagai K."/>
            <person name="Kimura K."/>
            <person name="Makita H."/>
            <person name="Sekine M."/>
            <person name="Obayashi M."/>
            <person name="Nishi T."/>
            <person name="Shibahara T."/>
            <person name="Tanaka T."/>
            <person name="Ishii S."/>
            <person name="Yamamoto J."/>
            <person name="Saito K."/>
            <person name="Kawai Y."/>
            <person name="Isono Y."/>
            <person name="Nakamura Y."/>
            <person name="Nagahari K."/>
            <person name="Murakami K."/>
            <person name="Yasuda T."/>
            <person name="Iwayanagi T."/>
            <person name="Wagatsuma M."/>
            <person name="Shiratori A."/>
            <person name="Sudo H."/>
            <person name="Hosoiri T."/>
            <person name="Kaku Y."/>
            <person name="Kodaira H."/>
            <person name="Kondo H."/>
            <person name="Sugawara M."/>
            <person name="Takahashi M."/>
            <person name="Kanda K."/>
            <person name="Yokoi T."/>
            <person name="Furuya T."/>
            <person name="Kikkawa E."/>
            <person name="Omura Y."/>
            <person name="Abe K."/>
            <person name="Kamihara K."/>
            <person name="Katsuta N."/>
            <person name="Sato K."/>
            <person name="Tanikawa M."/>
            <person name="Yamazaki M."/>
            <person name="Ninomiya K."/>
            <person name="Ishibashi T."/>
            <person name="Yamashita H."/>
            <person name="Murakawa K."/>
            <person name="Fujimori K."/>
            <person name="Tanai H."/>
            <person name="Kimata M."/>
            <person name="Watanabe M."/>
            <person name="Hiraoka S."/>
            <person name="Chiba Y."/>
            <person name="Ishida S."/>
            <person name="Ono Y."/>
            <person name="Takiguchi S."/>
            <person name="Watanabe S."/>
            <person name="Yosida M."/>
            <person name="Hotuta T."/>
            <person name="Kusano J."/>
            <person name="Kanehori K."/>
            <person name="Takahashi-Fujii A."/>
            <person name="Hara H."/>
            <person name="Tanase T.-O."/>
            <person name="Nomura Y."/>
            <person name="Togiya S."/>
            <person name="Komai F."/>
            <person name="Hara R."/>
            <person name="Takeuchi K."/>
            <person name="Arita M."/>
            <person name="Imose N."/>
            <person name="Musashino K."/>
            <person name="Yuuki H."/>
            <person name="Oshima A."/>
            <person name="Sasaki N."/>
            <person name="Aotsuka S."/>
            <person name="Yoshikawa Y."/>
            <person name="Matsunawa H."/>
            <person name="Ichihara T."/>
            <person name="Shiohata N."/>
            <person name="Sano S."/>
            <person name="Moriya S."/>
            <person name="Momiyama H."/>
            <person name="Satoh N."/>
            <person name="Takami S."/>
            <person name="Terashima Y."/>
            <person name="Suzuki O."/>
            <person name="Nakagawa S."/>
            <person name="Senoh A."/>
            <person name="Mizoguchi H."/>
            <person name="Goto Y."/>
            <person name="Shimizu F."/>
            <person name="Wakebe H."/>
            <person name="Hishigaki H."/>
            <person name="Watanabe T."/>
            <person name="Sugiyama A."/>
            <person name="Takemoto M."/>
            <person name="Kawakami B."/>
            <person name="Yamazaki M."/>
            <person name="Watanabe K."/>
            <person name="Kumagai A."/>
            <person name="Itakura S."/>
            <person name="Fukuzumi Y."/>
            <person name="Fujimori Y."/>
            <person name="Komiyama M."/>
            <person name="Tashiro H."/>
            <person name="Tanigami A."/>
            <person name="Fujiwara T."/>
            <person name="Ono T."/>
            <person name="Yamada K."/>
            <person name="Fujii Y."/>
            <person name="Ozaki K."/>
            <person name="Hirao M."/>
            <person name="Ohmori Y."/>
            <person name="Kawabata A."/>
            <person name="Hikiji T."/>
            <person name="Kobatake N."/>
            <person name="Inagaki H."/>
            <person name="Ikema Y."/>
            <person name="Okamoto S."/>
            <person name="Okitani R."/>
            <person name="Kawakami T."/>
            <person name="Noguchi S."/>
            <person name="Itoh T."/>
            <person name="Shigeta K."/>
            <person name="Senba T."/>
            <person name="Matsumura K."/>
            <person name="Nakajima Y."/>
            <person name="Mizuno T."/>
            <person name="Morinaga M."/>
            <person name="Sasaki M."/>
            <person name="Togashi T."/>
            <person name="Oyama M."/>
            <person name="Hata H."/>
            <person name="Watanabe M."/>
            <person name="Komatsu T."/>
            <person name="Mizushima-Sugano J."/>
            <person name="Satoh T."/>
            <person name="Shirai Y."/>
            <person name="Takahashi Y."/>
            <person name="Nakagawa K."/>
            <person name="Okumura K."/>
            <person name="Nagase T."/>
            <person name="Nomura N."/>
            <person name="Kikuchi H."/>
            <person name="Masuho Y."/>
            <person name="Yamashita R."/>
            <person name="Nakai K."/>
            <person name="Yada T."/>
            <person name="Nakamura Y."/>
            <person name="Ohara O."/>
            <person name="Isogai T."/>
            <person name="Sugano S."/>
        </authorList>
    </citation>
    <scope>NUCLEOTIDE SEQUENCE [LARGE SCALE MRNA] (ISOFORM 2)</scope>
    <source>
        <tissue>Brain</tissue>
    </source>
</reference>
<reference key="4">
    <citation type="journal article" date="2005" name="Nature">
        <title>Generation and annotation of the DNA sequences of human chromosomes 2 and 4.</title>
        <authorList>
            <person name="Hillier L.W."/>
            <person name="Graves T.A."/>
            <person name="Fulton R.S."/>
            <person name="Fulton L.A."/>
            <person name="Pepin K.H."/>
            <person name="Minx P."/>
            <person name="Wagner-McPherson C."/>
            <person name="Layman D."/>
            <person name="Wylie K."/>
            <person name="Sekhon M."/>
            <person name="Becker M.C."/>
            <person name="Fewell G.A."/>
            <person name="Delehaunty K.D."/>
            <person name="Miner T.L."/>
            <person name="Nash W.E."/>
            <person name="Kremitzki C."/>
            <person name="Oddy L."/>
            <person name="Du H."/>
            <person name="Sun H."/>
            <person name="Bradshaw-Cordum H."/>
            <person name="Ali J."/>
            <person name="Carter J."/>
            <person name="Cordes M."/>
            <person name="Harris A."/>
            <person name="Isak A."/>
            <person name="van Brunt A."/>
            <person name="Nguyen C."/>
            <person name="Du F."/>
            <person name="Courtney L."/>
            <person name="Kalicki J."/>
            <person name="Ozersky P."/>
            <person name="Abbott S."/>
            <person name="Armstrong J."/>
            <person name="Belter E.A."/>
            <person name="Caruso L."/>
            <person name="Cedroni M."/>
            <person name="Cotton M."/>
            <person name="Davidson T."/>
            <person name="Desai A."/>
            <person name="Elliott G."/>
            <person name="Erb T."/>
            <person name="Fronick C."/>
            <person name="Gaige T."/>
            <person name="Haakenson W."/>
            <person name="Haglund K."/>
            <person name="Holmes A."/>
            <person name="Harkins R."/>
            <person name="Kim K."/>
            <person name="Kruchowski S.S."/>
            <person name="Strong C.M."/>
            <person name="Grewal N."/>
            <person name="Goyea E."/>
            <person name="Hou S."/>
            <person name="Levy A."/>
            <person name="Martinka S."/>
            <person name="Mead K."/>
            <person name="McLellan M.D."/>
            <person name="Meyer R."/>
            <person name="Randall-Maher J."/>
            <person name="Tomlinson C."/>
            <person name="Dauphin-Kohlberg S."/>
            <person name="Kozlowicz-Reilly A."/>
            <person name="Shah N."/>
            <person name="Swearengen-Shahid S."/>
            <person name="Snider J."/>
            <person name="Strong J.T."/>
            <person name="Thompson J."/>
            <person name="Yoakum M."/>
            <person name="Leonard S."/>
            <person name="Pearman C."/>
            <person name="Trani L."/>
            <person name="Radionenko M."/>
            <person name="Waligorski J.E."/>
            <person name="Wang C."/>
            <person name="Rock S.M."/>
            <person name="Tin-Wollam A.-M."/>
            <person name="Maupin R."/>
            <person name="Latreille P."/>
            <person name="Wendl M.C."/>
            <person name="Yang S.-P."/>
            <person name="Pohl C."/>
            <person name="Wallis J.W."/>
            <person name="Spieth J."/>
            <person name="Bieri T.A."/>
            <person name="Berkowicz N."/>
            <person name="Nelson J.O."/>
            <person name="Osborne J."/>
            <person name="Ding L."/>
            <person name="Meyer R."/>
            <person name="Sabo A."/>
            <person name="Shotland Y."/>
            <person name="Sinha P."/>
            <person name="Wohldmann P.E."/>
            <person name="Cook L.L."/>
            <person name="Hickenbotham M.T."/>
            <person name="Eldred J."/>
            <person name="Williams D."/>
            <person name="Jones T.A."/>
            <person name="She X."/>
            <person name="Ciccarelli F.D."/>
            <person name="Izaurralde E."/>
            <person name="Taylor J."/>
            <person name="Schmutz J."/>
            <person name="Myers R.M."/>
            <person name="Cox D.R."/>
            <person name="Huang X."/>
            <person name="McPherson J.D."/>
            <person name="Mardis E.R."/>
            <person name="Clifton S.W."/>
            <person name="Warren W.C."/>
            <person name="Chinwalla A.T."/>
            <person name="Eddy S.R."/>
            <person name="Marra M.A."/>
            <person name="Ovcharenko I."/>
            <person name="Furey T.S."/>
            <person name="Miller W."/>
            <person name="Eichler E.E."/>
            <person name="Bork P."/>
            <person name="Suyama M."/>
            <person name="Torrents D."/>
            <person name="Waterston R.H."/>
            <person name="Wilson R.K."/>
        </authorList>
    </citation>
    <scope>NUCLEOTIDE SEQUENCE [LARGE SCALE GENOMIC DNA]</scope>
</reference>
<reference key="5">
    <citation type="submission" date="2005-09" db="EMBL/GenBank/DDBJ databases">
        <authorList>
            <person name="Mural R.J."/>
            <person name="Istrail S."/>
            <person name="Sutton G.G."/>
            <person name="Florea L."/>
            <person name="Halpern A.L."/>
            <person name="Mobarry C.M."/>
            <person name="Lippert R."/>
            <person name="Walenz B."/>
            <person name="Shatkay H."/>
            <person name="Dew I."/>
            <person name="Miller J.R."/>
            <person name="Flanigan M.J."/>
            <person name="Edwards N.J."/>
            <person name="Bolanos R."/>
            <person name="Fasulo D."/>
            <person name="Halldorsson B.V."/>
            <person name="Hannenhalli S."/>
            <person name="Turner R."/>
            <person name="Yooseph S."/>
            <person name="Lu F."/>
            <person name="Nusskern D.R."/>
            <person name="Shue B.C."/>
            <person name="Zheng X.H."/>
            <person name="Zhong F."/>
            <person name="Delcher A.L."/>
            <person name="Huson D.H."/>
            <person name="Kravitz S.A."/>
            <person name="Mouchard L."/>
            <person name="Reinert K."/>
            <person name="Remington K.A."/>
            <person name="Clark A.G."/>
            <person name="Waterman M.S."/>
            <person name="Eichler E.E."/>
            <person name="Adams M.D."/>
            <person name="Hunkapiller M.W."/>
            <person name="Myers E.W."/>
            <person name="Venter J.C."/>
        </authorList>
    </citation>
    <scope>NUCLEOTIDE SEQUENCE [LARGE SCALE GENOMIC DNA]</scope>
</reference>
<reference key="6">
    <citation type="journal article" date="2004" name="Genome Res.">
        <title>The status, quality, and expansion of the NIH full-length cDNA project: the Mammalian Gene Collection (MGC).</title>
        <authorList>
            <consortium name="The MGC Project Team"/>
        </authorList>
    </citation>
    <scope>NUCLEOTIDE SEQUENCE [LARGE SCALE MRNA] (ISOFORMS 1 AND 3)</scope>
    <source>
        <tissue>Brain</tissue>
        <tissue>Liver</tissue>
        <tissue>Prostate</tissue>
    </source>
</reference>
<reference key="7">
    <citation type="journal article" date="1989" name="Biochim. Biophys. Acta">
        <title>Identification of a human ribosomal protein mRNA with increased expression in colorectal tumours.</title>
        <authorList>
            <person name="Chester K.A."/>
            <person name="Robson L."/>
            <person name="Beyent R.H.J."/>
            <person name="Talbot I.C."/>
            <person name="Pringle J.H."/>
            <person name="Primrose L."/>
            <person name="Macpherson A.J.S."/>
            <person name="Boxer G."/>
            <person name="Southhall P."/>
            <person name="Malcolm A.D.B."/>
        </authorList>
    </citation>
    <scope>NUCLEOTIDE SEQUENCE [MRNA] OF 5-125 (ISOFORM 1)</scope>
</reference>
<reference key="8">
    <citation type="journal article" date="2003" name="Nature">
        <title>Proteomic characterization of the human centrosome by protein correlation profiling.</title>
        <authorList>
            <person name="Andersen J.S."/>
            <person name="Wilkinson C.J."/>
            <person name="Mayor T."/>
            <person name="Mortensen P."/>
            <person name="Nigg E.A."/>
            <person name="Mann M."/>
        </authorList>
    </citation>
    <scope>IDENTIFICATION BY MASS SPECTROMETRY</scope>
    <source>
        <tissue>Lymphoblast</tissue>
    </source>
</reference>
<reference key="9">
    <citation type="journal article" date="2005" name="Nat. Biotechnol.">
        <title>Immunoaffinity profiling of tyrosine phosphorylation in cancer cells.</title>
        <authorList>
            <person name="Rush J."/>
            <person name="Moritz A."/>
            <person name="Lee K.A."/>
            <person name="Guo A."/>
            <person name="Goss V.L."/>
            <person name="Spek E.J."/>
            <person name="Zhang H."/>
            <person name="Zha X.-M."/>
            <person name="Polakiewicz R.D."/>
            <person name="Comb M.J."/>
        </authorList>
    </citation>
    <scope>IDENTIFICATION BY MASS SPECTROMETRY [LARGE SCALE ANALYSIS]</scope>
</reference>
<reference key="10">
    <citation type="journal article" date="2006" name="Cell">
        <title>Global, in vivo, and site-specific phosphorylation dynamics in signaling networks.</title>
        <authorList>
            <person name="Olsen J.V."/>
            <person name="Blagoev B."/>
            <person name="Gnad F."/>
            <person name="Macek B."/>
            <person name="Kumar C."/>
            <person name="Mortensen P."/>
            <person name="Mann M."/>
        </authorList>
    </citation>
    <scope>PHOSPHORYLATION [LARGE SCALE ANALYSIS] AT SER-98</scope>
    <scope>IDENTIFICATION BY MASS SPECTROMETRY [LARGE SCALE ANALYSIS]</scope>
    <source>
        <tissue>Cervix carcinoma</tissue>
    </source>
</reference>
<reference key="11">
    <citation type="journal article" date="2008" name="Proc. Natl. Acad. Sci. U.S.A.">
        <title>A quantitative atlas of mitotic phosphorylation.</title>
        <authorList>
            <person name="Dephoure N."/>
            <person name="Zhou C."/>
            <person name="Villen J."/>
            <person name="Beausoleil S.A."/>
            <person name="Bakalarski C.E."/>
            <person name="Elledge S.J."/>
            <person name="Gygi S.P."/>
        </authorList>
    </citation>
    <scope>PHOSPHORYLATION [LARGE SCALE ANALYSIS] AT SER-98</scope>
    <scope>IDENTIFICATION BY MASS SPECTROMETRY [LARGE SCALE ANALYSIS]</scope>
    <source>
        <tissue>Cervix carcinoma</tissue>
    </source>
</reference>
<reference key="12">
    <citation type="journal article" date="2009" name="Sci. Signal.">
        <title>Quantitative phosphoproteomic analysis of T cell receptor signaling reveals system-wide modulation of protein-protein interactions.</title>
        <authorList>
            <person name="Mayya V."/>
            <person name="Lundgren D.H."/>
            <person name="Hwang S.-I."/>
            <person name="Rezaul K."/>
            <person name="Wu L."/>
            <person name="Eng J.K."/>
            <person name="Rodionov V."/>
            <person name="Han D.K."/>
        </authorList>
    </citation>
    <scope>IDENTIFICATION BY MASS SPECTROMETRY [LARGE SCALE ANALYSIS]</scope>
    <source>
        <tissue>Leukemic T-cell</tissue>
    </source>
</reference>
<reference key="13">
    <citation type="journal article" date="2009" name="Science">
        <title>Lysine acetylation targets protein complexes and co-regulates major cellular functions.</title>
        <authorList>
            <person name="Choudhary C."/>
            <person name="Kumar C."/>
            <person name="Gnad F."/>
            <person name="Nielsen M.L."/>
            <person name="Rehman M."/>
            <person name="Walther T.C."/>
            <person name="Olsen J.V."/>
            <person name="Mann M."/>
        </authorList>
    </citation>
    <scope>ACETYLATION [LARGE SCALE ANALYSIS] AT LYS-75</scope>
    <scope>IDENTIFICATION BY MASS SPECTROMETRY [LARGE SCALE ANALYSIS]</scope>
</reference>
<reference key="14">
    <citation type="journal article" date="2011" name="BMC Syst. Biol.">
        <title>Initial characterization of the human central proteome.</title>
        <authorList>
            <person name="Burkard T.R."/>
            <person name="Planyavsky M."/>
            <person name="Kaupe I."/>
            <person name="Breitwieser F.P."/>
            <person name="Buerckstuemmer T."/>
            <person name="Bennett K.L."/>
            <person name="Superti-Furga G."/>
            <person name="Colinge J."/>
        </authorList>
    </citation>
    <scope>IDENTIFICATION BY MASS SPECTROMETRY [LARGE SCALE ANALYSIS]</scope>
</reference>
<reference key="15">
    <citation type="journal article" date="2011" name="Sci. Signal.">
        <title>System-wide temporal characterization of the proteome and phosphoproteome of human embryonic stem cell differentiation.</title>
        <authorList>
            <person name="Rigbolt K.T."/>
            <person name="Prokhorova T.A."/>
            <person name="Akimov V."/>
            <person name="Henningsen J."/>
            <person name="Johansen P.T."/>
            <person name="Kratchmarova I."/>
            <person name="Kassem M."/>
            <person name="Mann M."/>
            <person name="Olsen J.V."/>
            <person name="Blagoev B."/>
        </authorList>
    </citation>
    <scope>PHOSPHORYLATION [LARGE SCALE ANALYSIS] AT SER-98</scope>
    <scope>IDENTIFICATION BY MASS SPECTROMETRY [LARGE SCALE ANALYSIS]</scope>
</reference>
<reference key="16">
    <citation type="journal article" date="2012" name="Proc. Natl. Acad. Sci. U.S.A.">
        <title>N-terminal acetylome analyses and functional insights of the N-terminal acetyltransferase NatB.</title>
        <authorList>
            <person name="Van Damme P."/>
            <person name="Lasa M."/>
            <person name="Polevoda B."/>
            <person name="Gazquez C."/>
            <person name="Elosegui-Artola A."/>
            <person name="Kim D.S."/>
            <person name="De Juan-Pardo E."/>
            <person name="Demeyer K."/>
            <person name="Hole K."/>
            <person name="Larrea E."/>
            <person name="Timmerman E."/>
            <person name="Prieto J."/>
            <person name="Arnesen T."/>
            <person name="Sherman F."/>
            <person name="Gevaert K."/>
            <person name="Aldabe R."/>
        </authorList>
    </citation>
    <scope>ACETYLATION [LARGE SCALE ANALYSIS] AT MET-1</scope>
    <scope>IDENTIFICATION BY MASS SPECTROMETRY [LARGE SCALE ANALYSIS]</scope>
</reference>
<reference key="17">
    <citation type="journal article" date="2014" name="Curr. Opin. Struct. Biol.">
        <title>A new system for naming ribosomal proteins.</title>
        <authorList>
            <person name="Ban N."/>
            <person name="Beckmann R."/>
            <person name="Cate J.H.D."/>
            <person name="Dinman J.D."/>
            <person name="Dragon F."/>
            <person name="Ellis S.R."/>
            <person name="Lafontaine D.L.J."/>
            <person name="Lindahl L."/>
            <person name="Liljas A."/>
            <person name="Lipton J.M."/>
            <person name="McAlear M.A."/>
            <person name="Moore P.B."/>
            <person name="Noller H.F."/>
            <person name="Ortega J."/>
            <person name="Panse V.G."/>
            <person name="Ramakrishnan V."/>
            <person name="Spahn C.M.T."/>
            <person name="Steitz T.A."/>
            <person name="Tchorzewski M."/>
            <person name="Tollervey D."/>
            <person name="Warren A.J."/>
            <person name="Williamson J.R."/>
            <person name="Wilson D."/>
            <person name="Yonath A."/>
            <person name="Yusupov M."/>
        </authorList>
    </citation>
    <scope>NOMENCLATURE</scope>
</reference>
<reference key="18">
    <citation type="journal article" date="2014" name="J. Proteomics">
        <title>An enzyme assisted RP-RPLC approach for in-depth analysis of human liver phosphoproteome.</title>
        <authorList>
            <person name="Bian Y."/>
            <person name="Song C."/>
            <person name="Cheng K."/>
            <person name="Dong M."/>
            <person name="Wang F."/>
            <person name="Huang J."/>
            <person name="Sun D."/>
            <person name="Wang L."/>
            <person name="Ye M."/>
            <person name="Zou H."/>
        </authorList>
    </citation>
    <scope>IDENTIFICATION BY MASS SPECTROMETRY [LARGE SCALE ANALYSIS]</scope>
    <source>
        <tissue>Liver</tissue>
    </source>
</reference>
<reference key="19">
    <citation type="journal article" date="2015" name="Proteomics">
        <title>N-terminome analysis of the human mitochondrial proteome.</title>
        <authorList>
            <person name="Vaca Jacome A.S."/>
            <person name="Rabilloud T."/>
            <person name="Schaeffer-Reiss C."/>
            <person name="Rompais M."/>
            <person name="Ayoub D."/>
            <person name="Lane L."/>
            <person name="Bairoch A."/>
            <person name="Van Dorsselaer A."/>
            <person name="Carapito C."/>
        </authorList>
    </citation>
    <scope>IDENTIFICATION BY MASS SPECTROMETRY [LARGE SCALE ANALYSIS]</scope>
</reference>
<reference key="20">
    <citation type="journal article" date="2013" name="Nature">
        <title>Structures of the human and Drosophila 80S ribosome.</title>
        <authorList>
            <person name="Anger A.M."/>
            <person name="Armache J.P."/>
            <person name="Berninghausen O."/>
            <person name="Habeck M."/>
            <person name="Subklewe M."/>
            <person name="Wilson D.N."/>
            <person name="Beckmann R."/>
        </authorList>
    </citation>
    <scope>STRUCTURE BY ELECTRON MICROSCOPY (5.0 ANGSTROMS)</scope>
    <scope>FUNCTION</scope>
    <scope>SUBUNIT</scope>
    <scope>SUBCELLULAR LOCATION</scope>
</reference>
<reference evidence="8 9 10 11" key="21">
    <citation type="journal article" date="2020" name="Nat. Commun.">
        <title>Structural snapshots of human pre-60S ribosomal particles before and after nuclear export.</title>
        <authorList>
            <person name="Liang X."/>
            <person name="Zuo M.Q."/>
            <person name="Zhang Y."/>
            <person name="Li N."/>
            <person name="Ma C."/>
            <person name="Dong M.Q."/>
            <person name="Gao N."/>
        </authorList>
    </citation>
    <scope>STRUCTURE BY ELECTRON MICROSCOPY (3.09 ANGSTROMS)</scope>
    <scope>FUNCTION</scope>
    <scope>SUBUNIT</scope>
</reference>
<organism>
    <name type="scientific">Homo sapiens</name>
    <name type="common">Human</name>
    <dbReference type="NCBI Taxonomy" id="9606"/>
    <lineage>
        <taxon>Eukaryota</taxon>
        <taxon>Metazoa</taxon>
        <taxon>Chordata</taxon>
        <taxon>Craniata</taxon>
        <taxon>Vertebrata</taxon>
        <taxon>Euteleostomi</taxon>
        <taxon>Mammalia</taxon>
        <taxon>Eutheria</taxon>
        <taxon>Euarchontoglires</taxon>
        <taxon>Primates</taxon>
        <taxon>Haplorrhini</taxon>
        <taxon>Catarrhini</taxon>
        <taxon>Hominidae</taxon>
        <taxon>Homo</taxon>
    </lineage>
</organism>
<keyword id="KW-0002">3D-structure</keyword>
<keyword id="KW-0007">Acetylation</keyword>
<keyword id="KW-0025">Alternative splicing</keyword>
<keyword id="KW-0963">Cytoplasm</keyword>
<keyword id="KW-0597">Phosphoprotein</keyword>
<keyword id="KW-1267">Proteomics identification</keyword>
<keyword id="KW-1185">Reference proteome</keyword>
<keyword id="KW-0687">Ribonucleoprotein</keyword>
<keyword id="KW-0689">Ribosomal protein</keyword>
<gene>
    <name type="primary">RPL31</name>
</gene>
<feature type="chain" id="PRO_0000153763" description="Large ribosomal subunit protein eL31">
    <location>
        <begin position="1"/>
        <end position="125"/>
    </location>
</feature>
<feature type="modified residue" description="N-acetylmethionine" evidence="16">
    <location>
        <position position="1"/>
    </location>
</feature>
<feature type="modified residue" description="Phosphoserine" evidence="1">
    <location>
        <position position="15"/>
    </location>
</feature>
<feature type="modified residue" description="N6-succinyllysine" evidence="1">
    <location>
        <position position="55"/>
    </location>
</feature>
<feature type="modified residue" description="N6-succinyllysine" evidence="1">
    <location>
        <position position="70"/>
    </location>
</feature>
<feature type="modified residue" description="N6-acetyllysine; alternate" evidence="14">
    <location>
        <position position="75"/>
    </location>
</feature>
<feature type="modified residue" description="N6-succinyllysine; alternate" evidence="1">
    <location>
        <position position="75"/>
    </location>
</feature>
<feature type="modified residue" description="Phosphoserine" evidence="12 13 15">
    <location>
        <position position="98"/>
    </location>
</feature>
<feature type="splice variant" id="VSP_042572" description="In isoform 2." evidence="4">
    <original>NLQTVNVDEN</original>
    <variation>ISVLNSVTVAKSP</variation>
    <location>
        <begin position="116"/>
        <end position="125"/>
    </location>
</feature>
<feature type="splice variant" id="VSP_043224" description="In isoform 3." evidence="5">
    <original>NLQTVNVDEN</original>
    <variation>SKFSIP</variation>
    <location>
        <begin position="116"/>
        <end position="125"/>
    </location>
</feature>
<comment type="function">
    <text evidence="2 3">Component of the large ribosomal subunit (PubMed:23636399, PubMed:32669547). The ribosome is a large ribonucleoprotein complex responsible for the synthesis of proteins in the cell (PubMed:23636399, PubMed:32669547).</text>
</comment>
<comment type="subunit">
    <text evidence="2 3">Component of the large ribosomal subunit.</text>
</comment>
<comment type="interaction">
    <interactant intactId="EBI-1053664">
        <id>P62899</id>
    </interactant>
    <interactant intactId="EBI-25837549">
        <id>P28329-3</id>
        <label>CHAT</label>
    </interactant>
    <organismsDiffer>false</organismsDiffer>
    <experiments>3</experiments>
</comment>
<comment type="interaction">
    <interactant intactId="EBI-1053664">
        <id>P62899</id>
    </interactant>
    <interactant intactId="EBI-932887">
        <id>P49711</id>
        <label>CTCF</label>
    </interactant>
    <organismsDiffer>false</organismsDiffer>
    <experiments>3</experiments>
</comment>
<comment type="interaction">
    <interactant intactId="EBI-1053664">
        <id>P62899</id>
    </interactant>
    <interactant intactId="EBI-348399">
        <id>P22607</id>
        <label>FGFR3</label>
    </interactant>
    <organismsDiffer>false</organismsDiffer>
    <experiments>3</experiments>
</comment>
<comment type="interaction">
    <interactant intactId="EBI-1053664">
        <id>P62899</id>
    </interactant>
    <interactant intactId="EBI-351506">
        <id>P06396</id>
        <label>GSN</label>
    </interactant>
    <organismsDiffer>false</organismsDiffer>
    <experiments>3</experiments>
</comment>
<comment type="interaction">
    <interactant intactId="EBI-1053664">
        <id>P62899</id>
    </interactant>
    <interactant intactId="EBI-466029">
        <id>P42858</id>
        <label>HTT</label>
    </interactant>
    <organismsDiffer>false</organismsDiffer>
    <experiments>3</experiments>
</comment>
<comment type="interaction">
    <interactant intactId="EBI-1053664">
        <id>P62899</id>
    </interactant>
    <interactant intactId="EBI-741480">
        <id>Q9UMX0</id>
        <label>UBQLN1</label>
    </interactant>
    <organismsDiffer>false</organismsDiffer>
    <experiments>3</experiments>
</comment>
<comment type="interaction">
    <interactant intactId="EBI-1053664">
        <id>P62899</id>
    </interactant>
    <interactant intactId="EBI-25900580">
        <id>Q9Y649</id>
    </interactant>
    <organismsDiffer>false</organismsDiffer>
    <experiments>3</experiments>
</comment>
<comment type="interaction">
    <interactant intactId="EBI-1053664">
        <id>P62899</id>
    </interactant>
    <interactant intactId="EBI-25475856">
        <id>P0DTC9</id>
        <label>N</label>
    </interactant>
    <organismsDiffer>true</organismsDiffer>
    <experiments>6</experiments>
</comment>
<comment type="subcellular location">
    <subcellularLocation>
        <location evidence="2">Cytoplasm</location>
    </subcellularLocation>
</comment>
<comment type="alternative products">
    <event type="alternative splicing"/>
    <isoform>
        <id>P62899-1</id>
        <name>1</name>
        <sequence type="displayed"/>
    </isoform>
    <isoform>
        <id>P62899-2</id>
        <name>2</name>
        <sequence type="described" ref="VSP_042572"/>
    </isoform>
    <isoform>
        <id>P62899-3</id>
        <name>3</name>
        <sequence type="described" ref="VSP_043224"/>
    </isoform>
</comment>
<comment type="similarity">
    <text evidence="7">Belongs to the eukaryotic ribosomal protein eL31 family.</text>
</comment>